<accession>Q033U7</accession>
<reference key="1">
    <citation type="journal article" date="2006" name="Proc. Natl. Acad. Sci. U.S.A.">
        <title>Comparative genomics of the lactic acid bacteria.</title>
        <authorList>
            <person name="Makarova K.S."/>
            <person name="Slesarev A."/>
            <person name="Wolf Y.I."/>
            <person name="Sorokin A."/>
            <person name="Mirkin B."/>
            <person name="Koonin E.V."/>
            <person name="Pavlov A."/>
            <person name="Pavlova N."/>
            <person name="Karamychev V."/>
            <person name="Polouchine N."/>
            <person name="Shakhova V."/>
            <person name="Grigoriev I."/>
            <person name="Lou Y."/>
            <person name="Rohksar D."/>
            <person name="Lucas S."/>
            <person name="Huang K."/>
            <person name="Goodstein D.M."/>
            <person name="Hawkins T."/>
            <person name="Plengvidhya V."/>
            <person name="Welker D."/>
            <person name="Hughes J."/>
            <person name="Goh Y."/>
            <person name="Benson A."/>
            <person name="Baldwin K."/>
            <person name="Lee J.-H."/>
            <person name="Diaz-Muniz I."/>
            <person name="Dosti B."/>
            <person name="Smeianov V."/>
            <person name="Wechter W."/>
            <person name="Barabote R."/>
            <person name="Lorca G."/>
            <person name="Altermann E."/>
            <person name="Barrangou R."/>
            <person name="Ganesan B."/>
            <person name="Xie Y."/>
            <person name="Rawsthorne H."/>
            <person name="Tamir D."/>
            <person name="Parker C."/>
            <person name="Breidt F."/>
            <person name="Broadbent J.R."/>
            <person name="Hutkins R."/>
            <person name="O'Sullivan D."/>
            <person name="Steele J."/>
            <person name="Unlu G."/>
            <person name="Saier M.H. Jr."/>
            <person name="Klaenhammer T."/>
            <person name="Richardson P."/>
            <person name="Kozyavkin S."/>
            <person name="Weimer B.C."/>
            <person name="Mills D.A."/>
        </authorList>
    </citation>
    <scope>NUCLEOTIDE SEQUENCE [LARGE SCALE GENOMIC DNA]</scope>
    <source>
        <strain>ATCC 334 / BCRC 17002 / CCUG 31169 / CIP 107868 / KCTC 3260 / NRRL B-441</strain>
    </source>
</reference>
<evidence type="ECO:0000255" key="1">
    <source>
        <dbReference type="HAMAP-Rule" id="MF_00005"/>
    </source>
</evidence>
<comment type="catalytic activity">
    <reaction evidence="1">
        <text>L-citrulline + L-aspartate + ATP = 2-(N(omega)-L-arginino)succinate + AMP + diphosphate + H(+)</text>
        <dbReference type="Rhea" id="RHEA:10932"/>
        <dbReference type="ChEBI" id="CHEBI:15378"/>
        <dbReference type="ChEBI" id="CHEBI:29991"/>
        <dbReference type="ChEBI" id="CHEBI:30616"/>
        <dbReference type="ChEBI" id="CHEBI:33019"/>
        <dbReference type="ChEBI" id="CHEBI:57472"/>
        <dbReference type="ChEBI" id="CHEBI:57743"/>
        <dbReference type="ChEBI" id="CHEBI:456215"/>
        <dbReference type="EC" id="6.3.4.5"/>
    </reaction>
</comment>
<comment type="pathway">
    <text evidence="1">Amino-acid biosynthesis; L-arginine biosynthesis; L-arginine from L-ornithine and carbamoyl phosphate: step 2/3.</text>
</comment>
<comment type="subunit">
    <text evidence="1">Homotetramer.</text>
</comment>
<comment type="subcellular location">
    <subcellularLocation>
        <location evidence="1">Cytoplasm</location>
    </subcellularLocation>
</comment>
<comment type="similarity">
    <text evidence="1">Belongs to the argininosuccinate synthase family. Type 1 subfamily.</text>
</comment>
<protein>
    <recommendedName>
        <fullName evidence="1">Argininosuccinate synthase</fullName>
        <ecNumber evidence="1">6.3.4.5</ecNumber>
    </recommendedName>
    <alternativeName>
        <fullName evidence="1">Citrulline--aspartate ligase</fullName>
    </alternativeName>
</protein>
<sequence>MTEKIVLAYSGGLDTSVAIPWLKDKGYEVIAVVLNVGQPNADFDAIQQKALNVGALDSIVVDAQDEFADHYVAPVIKANALYEGDYPLVSALSRPLIIEHLVKIAHAQNATAIAHGSTGKGNDQVRFEAAIHALDPEMKIEAPIRDFHWSREEEIDYAKEHNVPVPIGKKSPYSIDANLWGRANEAGILENPWNQAPDDAWGMTVSPEAAPDDPTFIDLTFKQGVPVALNDEPMALATMIKELNKLAGDNGIGRIDKIENRLVGIKSREVYEAPAAAVIMAAHHDLENLTLERDVQHFKPTIEDKITNMIYEAQWISPLFDALMAFIDKTQAVVNGTVKMKLYKGNATAVARKSAHNSLYDEDLATYTSADSFDQEAAAGFIKLWTLPTTVFEQVNHVHSEEKQHD</sequence>
<organism>
    <name type="scientific">Lacticaseibacillus paracasei (strain ATCC 334 / BCRC 17002 / CCUG 31169 / CIP 107868 / KCTC 3260 / NRRL B-441)</name>
    <name type="common">Lactobacillus paracasei</name>
    <dbReference type="NCBI Taxonomy" id="321967"/>
    <lineage>
        <taxon>Bacteria</taxon>
        <taxon>Bacillati</taxon>
        <taxon>Bacillota</taxon>
        <taxon>Bacilli</taxon>
        <taxon>Lactobacillales</taxon>
        <taxon>Lactobacillaceae</taxon>
        <taxon>Lacticaseibacillus</taxon>
    </lineage>
</organism>
<gene>
    <name evidence="1" type="primary">argG</name>
    <name type="ordered locus">LSEI_2811</name>
</gene>
<name>ASSY_LACP3</name>
<keyword id="KW-0028">Amino-acid biosynthesis</keyword>
<keyword id="KW-0055">Arginine biosynthesis</keyword>
<keyword id="KW-0067">ATP-binding</keyword>
<keyword id="KW-0963">Cytoplasm</keyword>
<keyword id="KW-0436">Ligase</keyword>
<keyword id="KW-0547">Nucleotide-binding</keyword>
<keyword id="KW-1185">Reference proteome</keyword>
<feature type="chain" id="PRO_0000329471" description="Argininosuccinate synthase">
    <location>
        <begin position="1"/>
        <end position="406"/>
    </location>
</feature>
<feature type="binding site" evidence="1">
    <location>
        <begin position="8"/>
        <end position="16"/>
    </location>
    <ligand>
        <name>ATP</name>
        <dbReference type="ChEBI" id="CHEBI:30616"/>
    </ligand>
</feature>
<feature type="binding site" evidence="1">
    <location>
        <position position="86"/>
    </location>
    <ligand>
        <name>L-citrulline</name>
        <dbReference type="ChEBI" id="CHEBI:57743"/>
    </ligand>
</feature>
<feature type="binding site" evidence="1">
    <location>
        <position position="116"/>
    </location>
    <ligand>
        <name>ATP</name>
        <dbReference type="ChEBI" id="CHEBI:30616"/>
    </ligand>
</feature>
<feature type="binding site" evidence="1">
    <location>
        <position position="118"/>
    </location>
    <ligand>
        <name>L-aspartate</name>
        <dbReference type="ChEBI" id="CHEBI:29991"/>
    </ligand>
</feature>
<feature type="binding site" evidence="1">
    <location>
        <position position="122"/>
    </location>
    <ligand>
        <name>L-aspartate</name>
        <dbReference type="ChEBI" id="CHEBI:29991"/>
    </ligand>
</feature>
<feature type="binding site" evidence="1">
    <location>
        <position position="122"/>
    </location>
    <ligand>
        <name>L-citrulline</name>
        <dbReference type="ChEBI" id="CHEBI:57743"/>
    </ligand>
</feature>
<feature type="binding site" evidence="1">
    <location>
        <position position="123"/>
    </location>
    <ligand>
        <name>L-aspartate</name>
        <dbReference type="ChEBI" id="CHEBI:29991"/>
    </ligand>
</feature>
<feature type="binding site" evidence="1">
    <location>
        <position position="126"/>
    </location>
    <ligand>
        <name>L-citrulline</name>
        <dbReference type="ChEBI" id="CHEBI:57743"/>
    </ligand>
</feature>
<feature type="binding site" evidence="1">
    <location>
        <position position="174"/>
    </location>
    <ligand>
        <name>L-citrulline</name>
        <dbReference type="ChEBI" id="CHEBI:57743"/>
    </ligand>
</feature>
<feature type="binding site" evidence="1">
    <location>
        <position position="259"/>
    </location>
    <ligand>
        <name>L-citrulline</name>
        <dbReference type="ChEBI" id="CHEBI:57743"/>
    </ligand>
</feature>
<feature type="binding site" evidence="1">
    <location>
        <position position="271"/>
    </location>
    <ligand>
        <name>L-citrulline</name>
        <dbReference type="ChEBI" id="CHEBI:57743"/>
    </ligand>
</feature>
<dbReference type="EC" id="6.3.4.5" evidence="1"/>
<dbReference type="EMBL" id="CP000423">
    <property type="protein sequence ID" value="ABJ71525.1"/>
    <property type="molecule type" value="Genomic_DNA"/>
</dbReference>
<dbReference type="RefSeq" id="WP_003568202.1">
    <property type="nucleotide sequence ID" value="NC_008526.1"/>
</dbReference>
<dbReference type="RefSeq" id="YP_807967.1">
    <property type="nucleotide sequence ID" value="NC_008526.1"/>
</dbReference>
<dbReference type="SMR" id="Q033U7"/>
<dbReference type="STRING" id="321967.LSEI_2811"/>
<dbReference type="PaxDb" id="321967-LSEI_2811"/>
<dbReference type="KEGG" id="lca:LSEI_2811"/>
<dbReference type="PATRIC" id="fig|321967.11.peg.2755"/>
<dbReference type="HOGENOM" id="CLU_032784_4_2_9"/>
<dbReference type="UniPathway" id="UPA00068">
    <property type="reaction ID" value="UER00113"/>
</dbReference>
<dbReference type="Proteomes" id="UP000001651">
    <property type="component" value="Chromosome"/>
</dbReference>
<dbReference type="GO" id="GO:0005737">
    <property type="term" value="C:cytoplasm"/>
    <property type="evidence" value="ECO:0007669"/>
    <property type="project" value="UniProtKB-SubCell"/>
</dbReference>
<dbReference type="GO" id="GO:0004055">
    <property type="term" value="F:argininosuccinate synthase activity"/>
    <property type="evidence" value="ECO:0007669"/>
    <property type="project" value="UniProtKB-UniRule"/>
</dbReference>
<dbReference type="GO" id="GO:0005524">
    <property type="term" value="F:ATP binding"/>
    <property type="evidence" value="ECO:0007669"/>
    <property type="project" value="UniProtKB-UniRule"/>
</dbReference>
<dbReference type="GO" id="GO:0000053">
    <property type="term" value="P:argininosuccinate metabolic process"/>
    <property type="evidence" value="ECO:0007669"/>
    <property type="project" value="TreeGrafter"/>
</dbReference>
<dbReference type="GO" id="GO:0006526">
    <property type="term" value="P:L-arginine biosynthetic process"/>
    <property type="evidence" value="ECO:0007669"/>
    <property type="project" value="UniProtKB-UniRule"/>
</dbReference>
<dbReference type="GO" id="GO:0000050">
    <property type="term" value="P:urea cycle"/>
    <property type="evidence" value="ECO:0007669"/>
    <property type="project" value="TreeGrafter"/>
</dbReference>
<dbReference type="CDD" id="cd01999">
    <property type="entry name" value="ASS"/>
    <property type="match status" value="1"/>
</dbReference>
<dbReference type="FunFam" id="3.40.50.620:FF:000038">
    <property type="entry name" value="Argininosuccinate synthase"/>
    <property type="match status" value="1"/>
</dbReference>
<dbReference type="FunFam" id="3.90.1260.10:FF:000007">
    <property type="entry name" value="Argininosuccinate synthase"/>
    <property type="match status" value="1"/>
</dbReference>
<dbReference type="Gene3D" id="3.90.1260.10">
    <property type="entry name" value="Argininosuccinate synthetase, chain A, domain 2"/>
    <property type="match status" value="1"/>
</dbReference>
<dbReference type="Gene3D" id="3.40.50.620">
    <property type="entry name" value="HUPs"/>
    <property type="match status" value="1"/>
</dbReference>
<dbReference type="Gene3D" id="1.20.5.470">
    <property type="entry name" value="Single helix bin"/>
    <property type="match status" value="1"/>
</dbReference>
<dbReference type="HAMAP" id="MF_00005">
    <property type="entry name" value="Arg_succ_synth_type1"/>
    <property type="match status" value="1"/>
</dbReference>
<dbReference type="InterPro" id="IPR048268">
    <property type="entry name" value="Arginosuc_syn_C"/>
</dbReference>
<dbReference type="InterPro" id="IPR048267">
    <property type="entry name" value="Arginosuc_syn_N"/>
</dbReference>
<dbReference type="InterPro" id="IPR001518">
    <property type="entry name" value="Arginosuc_synth"/>
</dbReference>
<dbReference type="InterPro" id="IPR018223">
    <property type="entry name" value="Arginosuc_synth_CS"/>
</dbReference>
<dbReference type="InterPro" id="IPR023434">
    <property type="entry name" value="Arginosuc_synth_type_1_subfam"/>
</dbReference>
<dbReference type="InterPro" id="IPR024074">
    <property type="entry name" value="AS_cat/multimer_dom_body"/>
</dbReference>
<dbReference type="InterPro" id="IPR014729">
    <property type="entry name" value="Rossmann-like_a/b/a_fold"/>
</dbReference>
<dbReference type="NCBIfam" id="TIGR00032">
    <property type="entry name" value="argG"/>
    <property type="match status" value="1"/>
</dbReference>
<dbReference type="NCBIfam" id="NF001770">
    <property type="entry name" value="PRK00509.1"/>
    <property type="match status" value="1"/>
</dbReference>
<dbReference type="PANTHER" id="PTHR11587">
    <property type="entry name" value="ARGININOSUCCINATE SYNTHASE"/>
    <property type="match status" value="1"/>
</dbReference>
<dbReference type="PANTHER" id="PTHR11587:SF2">
    <property type="entry name" value="ARGININOSUCCINATE SYNTHASE"/>
    <property type="match status" value="1"/>
</dbReference>
<dbReference type="Pfam" id="PF20979">
    <property type="entry name" value="Arginosuc_syn_C"/>
    <property type="match status" value="1"/>
</dbReference>
<dbReference type="Pfam" id="PF00764">
    <property type="entry name" value="Arginosuc_synth"/>
    <property type="match status" value="1"/>
</dbReference>
<dbReference type="SUPFAM" id="SSF52402">
    <property type="entry name" value="Adenine nucleotide alpha hydrolases-like"/>
    <property type="match status" value="1"/>
</dbReference>
<dbReference type="SUPFAM" id="SSF69864">
    <property type="entry name" value="Argininosuccinate synthetase, C-terminal domain"/>
    <property type="match status" value="1"/>
</dbReference>
<dbReference type="PROSITE" id="PS00564">
    <property type="entry name" value="ARGININOSUCCIN_SYN_1"/>
    <property type="match status" value="1"/>
</dbReference>
<dbReference type="PROSITE" id="PS00565">
    <property type="entry name" value="ARGININOSUCCIN_SYN_2"/>
    <property type="match status" value="1"/>
</dbReference>
<proteinExistence type="inferred from homology"/>